<keyword id="KW-0002">3D-structure</keyword>
<keyword id="KW-0150">Chloroplast</keyword>
<keyword id="KW-0903">Direct protein sequencing</keyword>
<keyword id="KW-1015">Disulfide bond</keyword>
<keyword id="KW-0249">Electron transport</keyword>
<keyword id="KW-0934">Plastid</keyword>
<keyword id="KW-0676">Redox-active center</keyword>
<keyword id="KW-1185">Reference proteome</keyword>
<keyword id="KW-0809">Transit peptide</keyword>
<keyword id="KW-0813">Transport</keyword>
<feature type="transit peptide" description="Chloroplast" evidence="4">
    <location>
        <begin position="1"/>
        <end position="67"/>
    </location>
</feature>
<feature type="chain" id="PRO_0000034178" description="Thioredoxin M-type, chloroplastic">
    <location>
        <begin position="68"/>
        <end position="181"/>
    </location>
</feature>
<feature type="chain" id="PRO_0000045891" description="Thioredoxin M-type Mc">
    <location>
        <begin position="69"/>
        <end position="181"/>
    </location>
</feature>
<feature type="chain" id="PRO_0000045892" description="Thioredoxin M-type Md">
    <location>
        <begin position="70"/>
        <end position="181"/>
    </location>
</feature>
<feature type="domain" description="Thioredoxin" evidence="1">
    <location>
        <begin position="68"/>
        <end position="180"/>
    </location>
</feature>
<feature type="active site" description="Nucleophile">
    <location>
        <position position="104"/>
    </location>
</feature>
<feature type="active site" description="Nucleophile">
    <location>
        <position position="107"/>
    </location>
</feature>
<feature type="site" description="Deprotonates C-terminal active site Cys">
    <location>
        <position position="98"/>
    </location>
</feature>
<feature type="site" description="Contributes to redox potential value">
    <location>
        <position position="105"/>
    </location>
</feature>
<feature type="site" description="Contributes to redox potential value">
    <location>
        <position position="106"/>
    </location>
</feature>
<feature type="disulfide bond" description="Redox-active" evidence="1 2">
    <location>
        <begin position="104"/>
        <end position="107"/>
    </location>
</feature>
<feature type="sequence variant">
    <original>H</original>
    <variation>Y</variation>
    <location>
        <position position="25"/>
    </location>
</feature>
<feature type="sequence variant">
    <original>V</original>
    <variation>L</variation>
    <location>
        <position position="33"/>
    </location>
</feature>
<feature type="sequence variant">
    <original>T</original>
    <variation>S</variation>
    <location>
        <position position="37"/>
    </location>
</feature>
<feature type="mutagenesis site" description="Prevents scission of the intermolecular disulfide bond by the second Cys of the active site." evidence="3">
    <original>C</original>
    <variation>S</variation>
    <location>
        <position position="107"/>
    </location>
</feature>
<feature type="sequence conflict" description="In Ref. 2; AA sequence." evidence="5" ref="2">
    <original>S</original>
    <variation>G</variation>
    <location>
        <position position="83"/>
    </location>
</feature>
<feature type="sequence conflict" description="In Ref. 2; AA sequence." evidence="5" ref="2">
    <original>ESEVPV</original>
    <variation>QSSEPS</variation>
    <location>
        <begin position="90"/>
        <end position="95"/>
    </location>
</feature>
<feature type="sequence conflict" description="In Ref. 2; AA sequence." evidence="5" ref="2">
    <original>Y</original>
    <variation>T</variation>
    <location>
        <position position="128"/>
    </location>
</feature>
<feature type="sequence conflict" description="In Ref. 2; AA sequence." evidence="5" ref="2">
    <original>AVPKST</original>
    <variation>DVSKYQ</variation>
    <location>
        <begin position="165"/>
        <end position="170"/>
    </location>
</feature>
<feature type="turn" evidence="6">
    <location>
        <begin position="81"/>
        <end position="83"/>
    </location>
</feature>
<feature type="helix" evidence="6">
    <location>
        <begin position="84"/>
        <end position="87"/>
    </location>
</feature>
<feature type="turn" evidence="6">
    <location>
        <begin position="88"/>
        <end position="90"/>
    </location>
</feature>
<feature type="strand" evidence="7">
    <location>
        <begin position="91"/>
        <end position="93"/>
    </location>
</feature>
<feature type="strand" evidence="6">
    <location>
        <begin position="95"/>
        <end position="100"/>
    </location>
</feature>
<feature type="helix" evidence="7">
    <location>
        <begin position="102"/>
        <end position="104"/>
    </location>
</feature>
<feature type="helix" evidence="6">
    <location>
        <begin position="105"/>
        <end position="120"/>
    </location>
</feature>
<feature type="turn" evidence="6">
    <location>
        <begin position="121"/>
        <end position="124"/>
    </location>
</feature>
<feature type="strand" evidence="6">
    <location>
        <begin position="126"/>
        <end position="131"/>
    </location>
</feature>
<feature type="turn" evidence="6">
    <location>
        <begin position="132"/>
        <end position="134"/>
    </location>
</feature>
<feature type="helix" evidence="6">
    <location>
        <begin position="136"/>
        <end position="141"/>
    </location>
</feature>
<feature type="strand" evidence="6">
    <location>
        <begin position="146"/>
        <end position="154"/>
    </location>
</feature>
<feature type="strand" evidence="6">
    <location>
        <begin position="157"/>
        <end position="164"/>
    </location>
</feature>
<feature type="helix" evidence="6">
    <location>
        <begin position="168"/>
        <end position="178"/>
    </location>
</feature>
<dbReference type="EMBL" id="X51462">
    <property type="protein sequence ID" value="CAA35826.1"/>
    <property type="molecule type" value="mRNA"/>
</dbReference>
<dbReference type="EMBL" id="X51463">
    <property type="protein sequence ID" value="CAA35827.1"/>
    <property type="molecule type" value="mRNA"/>
</dbReference>
<dbReference type="PIR" id="S20496">
    <property type="entry name" value="TXSPM"/>
</dbReference>
<dbReference type="PDB" id="1FB0">
    <property type="method" value="X-ray"/>
    <property type="resolution" value="2.26 A"/>
    <property type="chains" value="A/B=75-179"/>
</dbReference>
<dbReference type="PDB" id="1FB6">
    <property type="method" value="X-ray"/>
    <property type="resolution" value="2.10 A"/>
    <property type="chains" value="A/B=75-179"/>
</dbReference>
<dbReference type="PDB" id="1GL8">
    <property type="method" value="NMR"/>
    <property type="chains" value="A=76-179"/>
</dbReference>
<dbReference type="PDB" id="2PUK">
    <property type="method" value="X-ray"/>
    <property type="resolution" value="3.00 A"/>
    <property type="chains" value="C/G=75-180"/>
</dbReference>
<dbReference type="PDBsum" id="1FB0"/>
<dbReference type="PDBsum" id="1FB6"/>
<dbReference type="PDBsum" id="1GL8"/>
<dbReference type="PDBsum" id="2PUK"/>
<dbReference type="SMR" id="P07591"/>
<dbReference type="DIP" id="DIP-33500N"/>
<dbReference type="IntAct" id="P07591">
    <property type="interactions" value="43"/>
</dbReference>
<dbReference type="SABIO-RK" id="P07591"/>
<dbReference type="EvolutionaryTrace" id="P07591"/>
<dbReference type="Proteomes" id="UP001155700">
    <property type="component" value="Unplaced"/>
</dbReference>
<dbReference type="GO" id="GO:0009507">
    <property type="term" value="C:chloroplast"/>
    <property type="evidence" value="ECO:0007669"/>
    <property type="project" value="UniProtKB-SubCell"/>
</dbReference>
<dbReference type="GO" id="GO:0005737">
    <property type="term" value="C:cytoplasm"/>
    <property type="evidence" value="ECO:0000318"/>
    <property type="project" value="GO_Central"/>
</dbReference>
<dbReference type="GO" id="GO:0008047">
    <property type="term" value="F:enzyme activator activity"/>
    <property type="evidence" value="ECO:0007669"/>
    <property type="project" value="UniProtKB-ARBA"/>
</dbReference>
<dbReference type="GO" id="GO:0015035">
    <property type="term" value="F:protein-disulfide reductase activity"/>
    <property type="evidence" value="ECO:0000318"/>
    <property type="project" value="GO_Central"/>
</dbReference>
<dbReference type="CDD" id="cd02947">
    <property type="entry name" value="TRX_family"/>
    <property type="match status" value="1"/>
</dbReference>
<dbReference type="FunFam" id="3.40.30.10:FF:000001">
    <property type="entry name" value="Thioredoxin"/>
    <property type="match status" value="1"/>
</dbReference>
<dbReference type="Gene3D" id="3.40.30.10">
    <property type="entry name" value="Glutaredoxin"/>
    <property type="match status" value="1"/>
</dbReference>
<dbReference type="InterPro" id="IPR005746">
    <property type="entry name" value="Thioredoxin"/>
</dbReference>
<dbReference type="InterPro" id="IPR036249">
    <property type="entry name" value="Thioredoxin-like_sf"/>
</dbReference>
<dbReference type="InterPro" id="IPR017937">
    <property type="entry name" value="Thioredoxin_CS"/>
</dbReference>
<dbReference type="InterPro" id="IPR013766">
    <property type="entry name" value="Thioredoxin_domain"/>
</dbReference>
<dbReference type="NCBIfam" id="TIGR01068">
    <property type="entry name" value="thioredoxin"/>
    <property type="match status" value="1"/>
</dbReference>
<dbReference type="PANTHER" id="PTHR45663">
    <property type="entry name" value="GEO12009P1"/>
    <property type="match status" value="1"/>
</dbReference>
<dbReference type="PANTHER" id="PTHR45663:SF42">
    <property type="entry name" value="THIOREDOXIN M5, CHLOROPLASTIC"/>
    <property type="match status" value="1"/>
</dbReference>
<dbReference type="Pfam" id="PF00085">
    <property type="entry name" value="Thioredoxin"/>
    <property type="match status" value="1"/>
</dbReference>
<dbReference type="PRINTS" id="PR00421">
    <property type="entry name" value="THIOREDOXIN"/>
</dbReference>
<dbReference type="SUPFAM" id="SSF52833">
    <property type="entry name" value="Thioredoxin-like"/>
    <property type="match status" value="1"/>
</dbReference>
<dbReference type="PROSITE" id="PS00194">
    <property type="entry name" value="THIOREDOXIN_1"/>
    <property type="match status" value="1"/>
</dbReference>
<dbReference type="PROSITE" id="PS51352">
    <property type="entry name" value="THIOREDOXIN_2"/>
    <property type="match status" value="1"/>
</dbReference>
<reference key="1">
    <citation type="journal article" date="1992" name="Plant Mol. Biol.">
        <title>Nucleotide sequence of cDNAs encoding the entire precursor polypeptide for thioredoxin m from spinach chloroplasts.</title>
        <authorList>
            <person name="Wedel N."/>
            <person name="Clausmeyer S."/>
            <person name="Herrmann R.G."/>
            <person name="Gardet-Salvi L."/>
            <person name="Schurmann P."/>
        </authorList>
    </citation>
    <scope>NUCLEOTIDE SEQUENCE [MRNA]</scope>
</reference>
<reference key="2">
    <citation type="journal article" date="1986" name="Eur. J. Biochem.">
        <title>Further characterization and amino acid sequence of m-type thioredoxins from spinach chloroplasts.</title>
        <authorList>
            <person name="Maeda K."/>
            <person name="Tsugita A."/>
            <person name="Dalzoppo D."/>
            <person name="Vilbois F."/>
            <person name="Schurmann P."/>
        </authorList>
    </citation>
    <scope>PROTEIN SEQUENCE OF 68-181</scope>
</reference>
<reference key="3">
    <citation type="journal article" date="2000" name="J. Mol. Biol.">
        <title>Crystal structures of two functionally different thioredoxins in spinach chloroplasts.</title>
        <authorList>
            <person name="Capitani G."/>
            <person name="Markovic-Housley Z."/>
            <person name="DelVal G."/>
            <person name="Morris M."/>
            <person name="Jansonius J.N."/>
            <person name="Schurmann P."/>
        </authorList>
    </citation>
    <scope>X-RAY CRYSTALLOGRAPHY (2.1 ANGSTROMS) OF 75-179</scope>
    <scope>DISULFIDE BOND</scope>
</reference>
<reference key="4">
    <citation type="journal article" date="2007" name="Nature">
        <title>Structural snapshots along the reaction pathway of ferredoxin-thioredoxin reductase.</title>
        <authorList>
            <person name="Dai S."/>
            <person name="Friemann R."/>
            <person name="Glauser D.A."/>
            <person name="Bourquin F."/>
            <person name="Manieri W."/>
            <person name="Schurmann P."/>
            <person name="Eklund H."/>
        </authorList>
    </citation>
    <scope>X-RAY CRYSTALLOGRAPHY (3.00 ANGSTROMS) OF 75-180 OF MUTANT SER-107 IN COMPLEXES WITH BACTERIAL FTRC; FTRV AND PETF/FERREDOXIN</scope>
    <scope>SUBUNIT</scope>
    <scope>MUTAGENESIS OF CYS-107</scope>
</reference>
<protein>
    <recommendedName>
        <fullName>Thioredoxin M-type, chloroplastic</fullName>
        <shortName>Trx-M</shortName>
    </recommendedName>
    <component>
        <recommendedName>
            <fullName>Thioredoxin M-type Mc</fullName>
        </recommendedName>
    </component>
    <component>
        <recommendedName>
            <fullName>Thioredoxin M-type Md</fullName>
        </recommendedName>
    </component>
</protein>
<comment type="function">
    <text>Participates in various redox reactions through the reversible oxidation of the active center dithiol to a disulfide. The M form is known to activate NADP-malate dehydrogenase.</text>
</comment>
<comment type="subunit">
    <text evidence="3">Forms a complex with heterodimeric ferredoxin-thioredoxin reductase (FTR) and ferredoxin.</text>
</comment>
<comment type="interaction">
    <interactant intactId="EBI-537449">
        <id>P07591</id>
    </interactant>
    <interactant intactId="EBI-863211">
        <id>Q55389</id>
        <label>ftrC</label>
    </interactant>
    <organismsDiffer>true</organismsDiffer>
    <experiments>4</experiments>
</comment>
<comment type="interaction">
    <interactant intactId="EBI-537449">
        <id>P07591</id>
    </interactant>
    <interactant intactId="EBI-540311">
        <id>Q9LU86</id>
        <label>PRXQ</label>
    </interactant>
    <organismsDiffer>true</organismsDiffer>
    <experiments>2</experiments>
</comment>
<comment type="subcellular location">
    <subcellularLocation>
        <location>Plastid</location>
        <location>Chloroplast</location>
    </subcellularLocation>
</comment>
<comment type="similarity">
    <text evidence="5">Belongs to the thioredoxin family. Plant M-type subfamily.</text>
</comment>
<evidence type="ECO:0000255" key="1">
    <source>
        <dbReference type="PROSITE-ProRule" id="PRU00691"/>
    </source>
</evidence>
<evidence type="ECO:0000269" key="2">
    <source>
    </source>
</evidence>
<evidence type="ECO:0000269" key="3">
    <source>
    </source>
</evidence>
<evidence type="ECO:0000269" key="4">
    <source>
    </source>
</evidence>
<evidence type="ECO:0000305" key="5"/>
<evidence type="ECO:0007829" key="6">
    <source>
        <dbReference type="PDB" id="1FB6"/>
    </source>
</evidence>
<evidence type="ECO:0007829" key="7">
    <source>
        <dbReference type="PDB" id="1GL8"/>
    </source>
</evidence>
<proteinExistence type="evidence at protein level"/>
<name>TRXM_SPIOL</name>
<accession>P07591</accession>
<accession>Q41394</accession>
<accession>Q41395</accession>
<sequence>MAIENCLQLSTSASVGTVAVKSHVHHLQPSSKVNVPTFRGLKRSFPALSSSVSSSSPRQFRYSSVVCKASEAVKEVQDVNDSSWKEFVLESEVPVMVDFWAPWCGPCKLIAPVIDELAKEYSGKIAVYKLNTDEAPGIATQYNIRSIPTVLFFKNGERKESIIGAVPKSTLTDSIEKYLSP</sequence>
<organism>
    <name type="scientific">Spinacia oleracea</name>
    <name type="common">Spinach</name>
    <dbReference type="NCBI Taxonomy" id="3562"/>
    <lineage>
        <taxon>Eukaryota</taxon>
        <taxon>Viridiplantae</taxon>
        <taxon>Streptophyta</taxon>
        <taxon>Embryophyta</taxon>
        <taxon>Tracheophyta</taxon>
        <taxon>Spermatophyta</taxon>
        <taxon>Magnoliopsida</taxon>
        <taxon>eudicotyledons</taxon>
        <taxon>Gunneridae</taxon>
        <taxon>Pentapetalae</taxon>
        <taxon>Caryophyllales</taxon>
        <taxon>Chenopodiaceae</taxon>
        <taxon>Chenopodioideae</taxon>
        <taxon>Anserineae</taxon>
        <taxon>Spinacia</taxon>
    </lineage>
</organism>